<proteinExistence type="inferred from homology"/>
<organism>
    <name type="scientific">Mycoplasma pneumoniae (strain ATCC 29342 / M129 / Subtype 1)</name>
    <name type="common">Mycoplasmoides pneumoniae</name>
    <dbReference type="NCBI Taxonomy" id="272634"/>
    <lineage>
        <taxon>Bacteria</taxon>
        <taxon>Bacillati</taxon>
        <taxon>Mycoplasmatota</taxon>
        <taxon>Mycoplasmoidales</taxon>
        <taxon>Mycoplasmoidaceae</taxon>
        <taxon>Mycoplasmoides</taxon>
    </lineage>
</organism>
<comment type="similarity">
    <text evidence="1">Belongs to the MG067/MG068/MG395 family.</text>
</comment>
<evidence type="ECO:0000305" key="1"/>
<gene>
    <name type="ordered locus">MPN_577</name>
    <name type="ORF">D02_orf346</name>
    <name type="ORF">MP265</name>
</gene>
<feature type="chain" id="PRO_0000210729" description="Uncharacterized protein MPN_577">
    <location>
        <begin position="1"/>
        <end position="346"/>
    </location>
</feature>
<protein>
    <recommendedName>
        <fullName>Uncharacterized protein MPN_577</fullName>
    </recommendedName>
</protein>
<reference key="1">
    <citation type="journal article" date="1996" name="Nucleic Acids Res.">
        <title>Complete sequence analysis of the genome of the bacterium Mycoplasma pneumoniae.</title>
        <authorList>
            <person name="Himmelreich R."/>
            <person name="Hilbert H."/>
            <person name="Plagens H."/>
            <person name="Pirkl E."/>
            <person name="Li B.-C."/>
            <person name="Herrmann R."/>
        </authorList>
    </citation>
    <scope>NUCLEOTIDE SEQUENCE [LARGE SCALE GENOMIC DNA]</scope>
    <source>
        <strain>ATCC 29342 / M129 / Subtype 1</strain>
    </source>
</reference>
<keyword id="KW-1185">Reference proteome</keyword>
<sequence>MQLANNKWRVFGTGWLIDWKKPKRTHNLSEPFYLYLATNLHIAVALSNPKDYAPFNKASIGNSLTTVFCLGKYINPQLFKLRTDVSNAFVSIQTSTIPKTAFVARDFVPLQNRGNQWVAPVRASEDDPALAKSYLDFAIIEVPLFLHNQMDKQIYDHFMRPAINTYERLGNSVGIFAYQPMASFKRDSYFALGYPQVESNIAALNLNQTEVKPTRPEDVAQVTFKEPWSVDHHREIPTLTTNQLTTIKTKHFSGSKLSWPFDHTKSFKIKNKWLGQNYQMYGHGLGIDQVNLRKGTSSSLVINQKRQIVGIYFATVITNPKKAVRNDVGLVQMLRFQGEGNSLNPN</sequence>
<dbReference type="EMBL" id="U00089">
    <property type="protein sequence ID" value="AAB95913.1"/>
    <property type="molecule type" value="Genomic_DNA"/>
</dbReference>
<dbReference type="PIR" id="S73591">
    <property type="entry name" value="S73591"/>
</dbReference>
<dbReference type="RefSeq" id="NP_110266.1">
    <property type="nucleotide sequence ID" value="NC_000912.1"/>
</dbReference>
<dbReference type="RefSeq" id="WP_010874934.1">
    <property type="nucleotide sequence ID" value="NZ_OU342337.1"/>
</dbReference>
<dbReference type="STRING" id="272634.MPN_577"/>
<dbReference type="EnsemblBacteria" id="AAB95913">
    <property type="protein sequence ID" value="AAB95913"/>
    <property type="gene ID" value="MPN_577"/>
</dbReference>
<dbReference type="KEGG" id="mpn:MPN_577"/>
<dbReference type="PATRIC" id="fig|272634.6.peg.639"/>
<dbReference type="HOGENOM" id="CLU_038569_1_0_14"/>
<dbReference type="OrthoDB" id="395427at2"/>
<dbReference type="BioCyc" id="MPNE272634:G1GJ3-942-MONOMER"/>
<dbReference type="Proteomes" id="UP000000808">
    <property type="component" value="Chromosome"/>
</dbReference>
<dbReference type="InterPro" id="IPR022382">
    <property type="entry name" value="Mycoplasma_peptidase_DUF31"/>
</dbReference>
<dbReference type="InterPro" id="IPR022381">
    <property type="entry name" value="Uncharacterised_MG067"/>
</dbReference>
<dbReference type="Pfam" id="PF01732">
    <property type="entry name" value="Mycop_pep_DUF31"/>
    <property type="match status" value="1"/>
</dbReference>
<dbReference type="PRINTS" id="PR00840">
    <property type="entry name" value="Y06768FAMILY"/>
</dbReference>
<name>Y577_MYCPN</name>
<accession>P75203</accession>